<dbReference type="EMBL" id="AK055618">
    <property type="protein sequence ID" value="BAB70973.1"/>
    <property type="molecule type" value="mRNA"/>
</dbReference>
<dbReference type="EMBL" id="AP001010">
    <property type="status" value="NOT_ANNOTATED_CDS"/>
    <property type="molecule type" value="Genomic_DNA"/>
</dbReference>
<dbReference type="EMBL" id="AP001525">
    <property type="status" value="NOT_ANNOTATED_CDS"/>
    <property type="molecule type" value="Genomic_DNA"/>
</dbReference>
<dbReference type="EMBL" id="CH471113">
    <property type="protein sequence ID" value="EAX01508.1"/>
    <property type="molecule type" value="Genomic_DNA"/>
</dbReference>
<dbReference type="EMBL" id="CH471113">
    <property type="protein sequence ID" value="EAX01509.1"/>
    <property type="molecule type" value="Genomic_DNA"/>
</dbReference>
<dbReference type="CCDS" id="CCDS11866.1"/>
<dbReference type="RefSeq" id="NP_001092271.1">
    <property type="nucleotide sequence ID" value="NM_001098801.2"/>
</dbReference>
<dbReference type="RefSeq" id="NP_689565.2">
    <property type="nucleotide sequence ID" value="NM_152352.4"/>
</dbReference>
<dbReference type="RefSeq" id="XP_024306851.1">
    <property type="nucleotide sequence ID" value="XM_024451083.2"/>
</dbReference>
<dbReference type="RefSeq" id="XP_054174150.1">
    <property type="nucleotide sequence ID" value="XM_054318175.1"/>
</dbReference>
<dbReference type="SMR" id="Q96ND0"/>
<dbReference type="BioGRID" id="125924">
    <property type="interactions" value="64"/>
</dbReference>
<dbReference type="FunCoup" id="Q96ND0">
    <property type="interactions" value="1382"/>
</dbReference>
<dbReference type="IntAct" id="Q96ND0">
    <property type="interactions" value="21"/>
</dbReference>
<dbReference type="STRING" id="9606.ENSP00000323635"/>
<dbReference type="iPTMnet" id="Q96ND0"/>
<dbReference type="PhosphoSitePlus" id="Q96ND0"/>
<dbReference type="BioMuta" id="FAM210A"/>
<dbReference type="DMDM" id="296434465"/>
<dbReference type="jPOST" id="Q96ND0"/>
<dbReference type="MassIVE" id="Q96ND0"/>
<dbReference type="PaxDb" id="9606-ENSP00000323635"/>
<dbReference type="PeptideAtlas" id="Q96ND0"/>
<dbReference type="ProteomicsDB" id="77502"/>
<dbReference type="Pumba" id="Q96ND0"/>
<dbReference type="TopDownProteomics" id="Q96ND0"/>
<dbReference type="Antibodypedia" id="54115">
    <property type="antibodies" value="14 antibodies from 8 providers"/>
</dbReference>
<dbReference type="DNASU" id="125228"/>
<dbReference type="Ensembl" id="ENST00000322247.7">
    <property type="protein sequence ID" value="ENSP00000323635.3"/>
    <property type="gene ID" value="ENSG00000177150.13"/>
</dbReference>
<dbReference type="Ensembl" id="ENST00000402563.5">
    <property type="protein sequence ID" value="ENSP00000386115.1"/>
    <property type="gene ID" value="ENSG00000177150.13"/>
</dbReference>
<dbReference type="Ensembl" id="ENST00000651643.1">
    <property type="protein sequence ID" value="ENSP00000498370.1"/>
    <property type="gene ID" value="ENSG00000177150.13"/>
</dbReference>
<dbReference type="GeneID" id="125228"/>
<dbReference type="KEGG" id="hsa:125228"/>
<dbReference type="MANE-Select" id="ENST00000651643.1">
    <property type="protein sequence ID" value="ENSP00000498370.1"/>
    <property type="RefSeq nucleotide sequence ID" value="NM_152352.4"/>
    <property type="RefSeq protein sequence ID" value="NP_689565.2"/>
</dbReference>
<dbReference type="UCSC" id="uc002ksj.5">
    <property type="organism name" value="human"/>
</dbReference>
<dbReference type="AGR" id="HGNC:28346"/>
<dbReference type="CTD" id="125228"/>
<dbReference type="DisGeNET" id="125228"/>
<dbReference type="GeneCards" id="FAM210A"/>
<dbReference type="HGNC" id="HGNC:28346">
    <property type="gene designation" value="FAM210A"/>
</dbReference>
<dbReference type="HPA" id="ENSG00000177150">
    <property type="expression patterns" value="Tissue enhanced (tongue)"/>
</dbReference>
<dbReference type="MIM" id="617975">
    <property type="type" value="gene"/>
</dbReference>
<dbReference type="neXtProt" id="NX_Q96ND0"/>
<dbReference type="OpenTargets" id="ENSG00000177150"/>
<dbReference type="PharmGKB" id="PA134993051"/>
<dbReference type="VEuPathDB" id="HostDB:ENSG00000177150"/>
<dbReference type="eggNOG" id="KOG4082">
    <property type="taxonomic scope" value="Eukaryota"/>
</dbReference>
<dbReference type="GeneTree" id="ENSGT00940000156554"/>
<dbReference type="HOGENOM" id="CLU_085747_0_0_1"/>
<dbReference type="InParanoid" id="Q96ND0"/>
<dbReference type="OMA" id="MQWNVLR"/>
<dbReference type="OrthoDB" id="5874039at2759"/>
<dbReference type="PAN-GO" id="Q96ND0">
    <property type="GO annotations" value="1 GO annotation based on evolutionary models"/>
</dbReference>
<dbReference type="PhylomeDB" id="Q96ND0"/>
<dbReference type="TreeFam" id="TF313283"/>
<dbReference type="PathwayCommons" id="Q96ND0"/>
<dbReference type="SignaLink" id="Q96ND0"/>
<dbReference type="BioGRID-ORCS" id="125228">
    <property type="hits" value="185 hits in 1170 CRISPR screens"/>
</dbReference>
<dbReference type="ChiTaRS" id="FAM210A">
    <property type="organism name" value="human"/>
</dbReference>
<dbReference type="GenomeRNAi" id="125228"/>
<dbReference type="Pharos" id="Q96ND0">
    <property type="development level" value="Tdark"/>
</dbReference>
<dbReference type="PRO" id="PR:Q96ND0"/>
<dbReference type="Proteomes" id="UP000005640">
    <property type="component" value="Chromosome 18"/>
</dbReference>
<dbReference type="RNAct" id="Q96ND0">
    <property type="molecule type" value="protein"/>
</dbReference>
<dbReference type="Bgee" id="ENSG00000177150">
    <property type="expression patterns" value="Expressed in left ventricle myocardium and 187 other cell types or tissues"/>
</dbReference>
<dbReference type="ExpressionAtlas" id="Q96ND0">
    <property type="expression patterns" value="baseline and differential"/>
</dbReference>
<dbReference type="GO" id="GO:0005737">
    <property type="term" value="C:cytoplasm"/>
    <property type="evidence" value="ECO:0000250"/>
    <property type="project" value="UniProtKB"/>
</dbReference>
<dbReference type="GO" id="GO:0016020">
    <property type="term" value="C:membrane"/>
    <property type="evidence" value="ECO:0007669"/>
    <property type="project" value="UniProtKB-SubCell"/>
</dbReference>
<dbReference type="GO" id="GO:0005739">
    <property type="term" value="C:mitochondrion"/>
    <property type="evidence" value="ECO:0006056"/>
    <property type="project" value="FlyBase"/>
</dbReference>
<dbReference type="Gene3D" id="6.10.140.1430">
    <property type="match status" value="1"/>
</dbReference>
<dbReference type="InterPro" id="IPR045866">
    <property type="entry name" value="FAM210A/B-like"/>
</dbReference>
<dbReference type="InterPro" id="IPR009688">
    <property type="entry name" value="FAM210A/B-like_dom"/>
</dbReference>
<dbReference type="PANTHER" id="PTHR21377:SF1">
    <property type="entry name" value="PROTEIN FAM210A"/>
    <property type="match status" value="1"/>
</dbReference>
<dbReference type="PANTHER" id="PTHR21377">
    <property type="entry name" value="PROTEIN FAM210B, MITOCHONDRIAL"/>
    <property type="match status" value="1"/>
</dbReference>
<dbReference type="Pfam" id="PF06916">
    <property type="entry name" value="FAM210A-B_dom"/>
    <property type="match status" value="1"/>
</dbReference>
<keyword id="KW-0175">Coiled coil</keyword>
<keyword id="KW-0963">Cytoplasm</keyword>
<keyword id="KW-0472">Membrane</keyword>
<keyword id="KW-0496">Mitochondrion</keyword>
<keyword id="KW-1267">Proteomics identification</keyword>
<keyword id="KW-1185">Reference proteome</keyword>
<keyword id="KW-0812">Transmembrane</keyword>
<keyword id="KW-1133">Transmembrane helix</keyword>
<proteinExistence type="evidence at protein level"/>
<feature type="chain" id="PRO_0000274424" description="Protein FAM210A">
    <location>
        <begin position="1"/>
        <end position="272"/>
    </location>
</feature>
<feature type="transmembrane region" description="Helical" evidence="2">
    <location>
        <begin position="136"/>
        <end position="156"/>
    </location>
</feature>
<feature type="domain" description="DUF1279">
    <location>
        <begin position="117"/>
        <end position="229"/>
    </location>
</feature>
<feature type="region of interest" description="Disordered" evidence="3">
    <location>
        <begin position="246"/>
        <end position="272"/>
    </location>
</feature>
<feature type="coiled-coil region" evidence="2">
    <location>
        <begin position="229"/>
        <end position="271"/>
    </location>
</feature>
<feature type="sequence variant" id="VAR_056844" description="In dbSNP:rs35493157.">
    <original>Y</original>
    <variation>N</variation>
    <location>
        <position position="39"/>
    </location>
</feature>
<feature type="sequence variant" id="VAR_035686" description="In a breast cancer sample; somatic mutation; dbSNP:rs116967198." evidence="4">
    <original>R</original>
    <variation>H</variation>
    <location>
        <position position="82"/>
    </location>
</feature>
<feature type="sequence variant" id="VAR_035687" description="In a breast cancer sample; somatic mutation." evidence="4">
    <original>V</original>
    <variation>E</variation>
    <location>
        <position position="140"/>
    </location>
</feature>
<feature type="sequence variant" id="VAR_060439" description="In dbSNP:rs2847146.">
    <original>E</original>
    <variation>K</variation>
    <location>
        <position position="167"/>
    </location>
</feature>
<feature type="sequence conflict" description="In Ref. 1; BAB70973." evidence="6" ref="1">
    <original>Q</original>
    <variation>R</variation>
    <location>
        <position position="49"/>
    </location>
</feature>
<name>F210A_HUMAN</name>
<reference key="1">
    <citation type="journal article" date="2004" name="Nat. Genet.">
        <title>Complete sequencing and characterization of 21,243 full-length human cDNAs.</title>
        <authorList>
            <person name="Ota T."/>
            <person name="Suzuki Y."/>
            <person name="Nishikawa T."/>
            <person name="Otsuki T."/>
            <person name="Sugiyama T."/>
            <person name="Irie R."/>
            <person name="Wakamatsu A."/>
            <person name="Hayashi K."/>
            <person name="Sato H."/>
            <person name="Nagai K."/>
            <person name="Kimura K."/>
            <person name="Makita H."/>
            <person name="Sekine M."/>
            <person name="Obayashi M."/>
            <person name="Nishi T."/>
            <person name="Shibahara T."/>
            <person name="Tanaka T."/>
            <person name="Ishii S."/>
            <person name="Yamamoto J."/>
            <person name="Saito K."/>
            <person name="Kawai Y."/>
            <person name="Isono Y."/>
            <person name="Nakamura Y."/>
            <person name="Nagahari K."/>
            <person name="Murakami K."/>
            <person name="Yasuda T."/>
            <person name="Iwayanagi T."/>
            <person name="Wagatsuma M."/>
            <person name="Shiratori A."/>
            <person name="Sudo H."/>
            <person name="Hosoiri T."/>
            <person name="Kaku Y."/>
            <person name="Kodaira H."/>
            <person name="Kondo H."/>
            <person name="Sugawara M."/>
            <person name="Takahashi M."/>
            <person name="Kanda K."/>
            <person name="Yokoi T."/>
            <person name="Furuya T."/>
            <person name="Kikkawa E."/>
            <person name="Omura Y."/>
            <person name="Abe K."/>
            <person name="Kamihara K."/>
            <person name="Katsuta N."/>
            <person name="Sato K."/>
            <person name="Tanikawa M."/>
            <person name="Yamazaki M."/>
            <person name="Ninomiya K."/>
            <person name="Ishibashi T."/>
            <person name="Yamashita H."/>
            <person name="Murakawa K."/>
            <person name="Fujimori K."/>
            <person name="Tanai H."/>
            <person name="Kimata M."/>
            <person name="Watanabe M."/>
            <person name="Hiraoka S."/>
            <person name="Chiba Y."/>
            <person name="Ishida S."/>
            <person name="Ono Y."/>
            <person name="Takiguchi S."/>
            <person name="Watanabe S."/>
            <person name="Yosida M."/>
            <person name="Hotuta T."/>
            <person name="Kusano J."/>
            <person name="Kanehori K."/>
            <person name="Takahashi-Fujii A."/>
            <person name="Hara H."/>
            <person name="Tanase T.-O."/>
            <person name="Nomura Y."/>
            <person name="Togiya S."/>
            <person name="Komai F."/>
            <person name="Hara R."/>
            <person name="Takeuchi K."/>
            <person name="Arita M."/>
            <person name="Imose N."/>
            <person name="Musashino K."/>
            <person name="Yuuki H."/>
            <person name="Oshima A."/>
            <person name="Sasaki N."/>
            <person name="Aotsuka S."/>
            <person name="Yoshikawa Y."/>
            <person name="Matsunawa H."/>
            <person name="Ichihara T."/>
            <person name="Shiohata N."/>
            <person name="Sano S."/>
            <person name="Moriya S."/>
            <person name="Momiyama H."/>
            <person name="Satoh N."/>
            <person name="Takami S."/>
            <person name="Terashima Y."/>
            <person name="Suzuki O."/>
            <person name="Nakagawa S."/>
            <person name="Senoh A."/>
            <person name="Mizoguchi H."/>
            <person name="Goto Y."/>
            <person name="Shimizu F."/>
            <person name="Wakebe H."/>
            <person name="Hishigaki H."/>
            <person name="Watanabe T."/>
            <person name="Sugiyama A."/>
            <person name="Takemoto M."/>
            <person name="Kawakami B."/>
            <person name="Yamazaki M."/>
            <person name="Watanabe K."/>
            <person name="Kumagai A."/>
            <person name="Itakura S."/>
            <person name="Fukuzumi Y."/>
            <person name="Fujimori Y."/>
            <person name="Komiyama M."/>
            <person name="Tashiro H."/>
            <person name="Tanigami A."/>
            <person name="Fujiwara T."/>
            <person name="Ono T."/>
            <person name="Yamada K."/>
            <person name="Fujii Y."/>
            <person name="Ozaki K."/>
            <person name="Hirao M."/>
            <person name="Ohmori Y."/>
            <person name="Kawabata A."/>
            <person name="Hikiji T."/>
            <person name="Kobatake N."/>
            <person name="Inagaki H."/>
            <person name="Ikema Y."/>
            <person name="Okamoto S."/>
            <person name="Okitani R."/>
            <person name="Kawakami T."/>
            <person name="Noguchi S."/>
            <person name="Itoh T."/>
            <person name="Shigeta K."/>
            <person name="Senba T."/>
            <person name="Matsumura K."/>
            <person name="Nakajima Y."/>
            <person name="Mizuno T."/>
            <person name="Morinaga M."/>
            <person name="Sasaki M."/>
            <person name="Togashi T."/>
            <person name="Oyama M."/>
            <person name="Hata H."/>
            <person name="Watanabe M."/>
            <person name="Komatsu T."/>
            <person name="Mizushima-Sugano J."/>
            <person name="Satoh T."/>
            <person name="Shirai Y."/>
            <person name="Takahashi Y."/>
            <person name="Nakagawa K."/>
            <person name="Okumura K."/>
            <person name="Nagase T."/>
            <person name="Nomura N."/>
            <person name="Kikuchi H."/>
            <person name="Masuho Y."/>
            <person name="Yamashita R."/>
            <person name="Nakai K."/>
            <person name="Yada T."/>
            <person name="Nakamura Y."/>
            <person name="Ohara O."/>
            <person name="Isogai T."/>
            <person name="Sugano S."/>
        </authorList>
    </citation>
    <scope>NUCLEOTIDE SEQUENCE [LARGE SCALE MRNA]</scope>
</reference>
<reference key="2">
    <citation type="journal article" date="2005" name="Nature">
        <title>DNA sequence and analysis of human chromosome 18.</title>
        <authorList>
            <person name="Nusbaum C."/>
            <person name="Zody M.C."/>
            <person name="Borowsky M.L."/>
            <person name="Kamal M."/>
            <person name="Kodira C.D."/>
            <person name="Taylor T.D."/>
            <person name="Whittaker C.A."/>
            <person name="Chang J.L."/>
            <person name="Cuomo C.A."/>
            <person name="Dewar K."/>
            <person name="FitzGerald M.G."/>
            <person name="Yang X."/>
            <person name="Abouelleil A."/>
            <person name="Allen N.R."/>
            <person name="Anderson S."/>
            <person name="Bloom T."/>
            <person name="Bugalter B."/>
            <person name="Butler J."/>
            <person name="Cook A."/>
            <person name="DeCaprio D."/>
            <person name="Engels R."/>
            <person name="Garber M."/>
            <person name="Gnirke A."/>
            <person name="Hafez N."/>
            <person name="Hall J.L."/>
            <person name="Norman C.H."/>
            <person name="Itoh T."/>
            <person name="Jaffe D.B."/>
            <person name="Kuroki Y."/>
            <person name="Lehoczky J."/>
            <person name="Lui A."/>
            <person name="Macdonald P."/>
            <person name="Mauceli E."/>
            <person name="Mikkelsen T.S."/>
            <person name="Naylor J.W."/>
            <person name="Nicol R."/>
            <person name="Nguyen C."/>
            <person name="Noguchi H."/>
            <person name="O'Leary S.B."/>
            <person name="Piqani B."/>
            <person name="Smith C.L."/>
            <person name="Talamas J.A."/>
            <person name="Topham K."/>
            <person name="Totoki Y."/>
            <person name="Toyoda A."/>
            <person name="Wain H.M."/>
            <person name="Young S.K."/>
            <person name="Zeng Q."/>
            <person name="Zimmer A.R."/>
            <person name="Fujiyama A."/>
            <person name="Hattori M."/>
            <person name="Birren B.W."/>
            <person name="Sakaki Y."/>
            <person name="Lander E.S."/>
        </authorList>
    </citation>
    <scope>NUCLEOTIDE SEQUENCE [LARGE SCALE GENOMIC DNA]</scope>
</reference>
<reference key="3">
    <citation type="submission" date="2005-09" db="EMBL/GenBank/DDBJ databases">
        <authorList>
            <person name="Mural R.J."/>
            <person name="Istrail S."/>
            <person name="Sutton G.G."/>
            <person name="Florea L."/>
            <person name="Halpern A.L."/>
            <person name="Mobarry C.M."/>
            <person name="Lippert R."/>
            <person name="Walenz B."/>
            <person name="Shatkay H."/>
            <person name="Dew I."/>
            <person name="Miller J.R."/>
            <person name="Flanigan M.J."/>
            <person name="Edwards N.J."/>
            <person name="Bolanos R."/>
            <person name="Fasulo D."/>
            <person name="Halldorsson B.V."/>
            <person name="Hannenhalli S."/>
            <person name="Turner R."/>
            <person name="Yooseph S."/>
            <person name="Lu F."/>
            <person name="Nusskern D.R."/>
            <person name="Shue B.C."/>
            <person name="Zheng X.H."/>
            <person name="Zhong F."/>
            <person name="Delcher A.L."/>
            <person name="Huson D.H."/>
            <person name="Kravitz S.A."/>
            <person name="Mouchard L."/>
            <person name="Reinert K."/>
            <person name="Remington K.A."/>
            <person name="Clark A.G."/>
            <person name="Waterman M.S."/>
            <person name="Eichler E.E."/>
            <person name="Adams M.D."/>
            <person name="Hunkapiller M.W."/>
            <person name="Myers E.W."/>
            <person name="Venter J.C."/>
        </authorList>
    </citation>
    <scope>NUCLEOTIDE SEQUENCE [LARGE SCALE GENOMIC DNA]</scope>
</reference>
<reference key="4">
    <citation type="journal article" date="2011" name="BMC Syst. Biol.">
        <title>Initial characterization of the human central proteome.</title>
        <authorList>
            <person name="Burkard T.R."/>
            <person name="Planyavsky M."/>
            <person name="Kaupe I."/>
            <person name="Breitwieser F.P."/>
            <person name="Buerckstuemmer T."/>
            <person name="Bennett K.L."/>
            <person name="Superti-Furga G."/>
            <person name="Colinge J."/>
        </authorList>
    </citation>
    <scope>IDENTIFICATION BY MASS SPECTROMETRY [LARGE SCALE ANALYSIS]</scope>
</reference>
<reference key="5">
    <citation type="journal article" date="2012" name="Nucleic Acids Res.">
        <title>Mitochondrial nucleoid interacting proteins support mitochondrial protein synthesis.</title>
        <authorList>
            <person name="He J."/>
            <person name="Cooper H.M."/>
            <person name="Reyes A."/>
            <person name="Di Re M."/>
            <person name="Sembongi H."/>
            <person name="Litwin T.R."/>
            <person name="Gao J."/>
            <person name="Neuman K.C."/>
            <person name="Fearnley I.M."/>
            <person name="Spinazzola A."/>
            <person name="Walker J.E."/>
            <person name="Holt I.J."/>
        </authorList>
    </citation>
    <scope>INTERACTION WITH ATAD3A</scope>
</reference>
<reference key="6">
    <citation type="journal article" date="2015" name="Proteomics">
        <title>N-terminome analysis of the human mitochondrial proteome.</title>
        <authorList>
            <person name="Vaca Jacome A.S."/>
            <person name="Rabilloud T."/>
            <person name="Schaeffer-Reiss C."/>
            <person name="Rompais M."/>
            <person name="Ayoub D."/>
            <person name="Lane L."/>
            <person name="Bairoch A."/>
            <person name="Van Dorsselaer A."/>
            <person name="Carapito C."/>
        </authorList>
    </citation>
    <scope>IDENTIFICATION BY MASS SPECTROMETRY [LARGE SCALE ANALYSIS]</scope>
</reference>
<reference key="7">
    <citation type="journal article" date="2006" name="Science">
        <title>The consensus coding sequences of human breast and colorectal cancers.</title>
        <authorList>
            <person name="Sjoeblom T."/>
            <person name="Jones S."/>
            <person name="Wood L.D."/>
            <person name="Parsons D.W."/>
            <person name="Lin J."/>
            <person name="Barber T.D."/>
            <person name="Mandelker D."/>
            <person name="Leary R.J."/>
            <person name="Ptak J."/>
            <person name="Silliman N."/>
            <person name="Szabo S."/>
            <person name="Buckhaults P."/>
            <person name="Farrell C."/>
            <person name="Meeh P."/>
            <person name="Markowitz S.D."/>
            <person name="Willis J."/>
            <person name="Dawson D."/>
            <person name="Willson J.K.V."/>
            <person name="Gazdar A.F."/>
            <person name="Hartigan J."/>
            <person name="Wu L."/>
            <person name="Liu C."/>
            <person name="Parmigiani G."/>
            <person name="Park B.H."/>
            <person name="Bachman K.E."/>
            <person name="Papadopoulos N."/>
            <person name="Vogelstein B."/>
            <person name="Kinzler K.W."/>
            <person name="Velculescu V.E."/>
        </authorList>
    </citation>
    <scope>VARIANTS [LARGE SCALE ANALYSIS] HIS-82 AND GLU-140</scope>
</reference>
<evidence type="ECO:0000250" key="1">
    <source>
        <dbReference type="UniProtKB" id="Q8BGY7"/>
    </source>
</evidence>
<evidence type="ECO:0000255" key="2"/>
<evidence type="ECO:0000256" key="3">
    <source>
        <dbReference type="SAM" id="MobiDB-lite"/>
    </source>
</evidence>
<evidence type="ECO:0000269" key="4">
    <source>
    </source>
</evidence>
<evidence type="ECO:0000269" key="5">
    <source>
    </source>
</evidence>
<evidence type="ECO:0000305" key="6"/>
<protein>
    <recommendedName>
        <fullName>Protein FAM210A</fullName>
    </recommendedName>
</protein>
<comment type="function">
    <text evidence="1">May play a role in the structure and strength of both muscle and bone.</text>
</comment>
<comment type="subunit">
    <text evidence="5">Interacts with ATAD3A.</text>
</comment>
<comment type="subcellular location">
    <subcellularLocation>
        <location evidence="2 6">Membrane</location>
        <topology evidence="2">Single-pass membrane protein</topology>
    </subcellularLocation>
    <subcellularLocation>
        <location evidence="1">Mitochondrion</location>
    </subcellularLocation>
    <subcellularLocation>
        <location evidence="1">Cytoplasm</location>
    </subcellularLocation>
</comment>
<comment type="similarity">
    <text evidence="6">Belongs to the FAM210 family.</text>
</comment>
<gene>
    <name type="primary">FAM210A</name>
    <name type="synonym">C18orf19</name>
</gene>
<organism>
    <name type="scientific">Homo sapiens</name>
    <name type="common">Human</name>
    <dbReference type="NCBI Taxonomy" id="9606"/>
    <lineage>
        <taxon>Eukaryota</taxon>
        <taxon>Metazoa</taxon>
        <taxon>Chordata</taxon>
        <taxon>Craniata</taxon>
        <taxon>Vertebrata</taxon>
        <taxon>Euteleostomi</taxon>
        <taxon>Mammalia</taxon>
        <taxon>Eutheria</taxon>
        <taxon>Euarchontoglires</taxon>
        <taxon>Primates</taxon>
        <taxon>Haplorrhini</taxon>
        <taxon>Catarrhini</taxon>
        <taxon>Hominidae</taxon>
        <taxon>Homo</taxon>
    </lineage>
</organism>
<sequence>MQWNVPRTVSRLARRTCLEPHNAGLFGHCQNVKGPLLLYNAESKVVLVQGPQKQWLHLSAAQCVAKERRPLDAHPPQPGVLRHKQGKQHVSFRRVFSSSATAQGTPEKKEEPDPLQDKSISLYQRFKKTFRQYGKVLIPVHLITSGVWFGTFYYAALKGVNVVPFLELIGLPDSVVSILKNSQSGNALTAYALFKIATPARYTVTLGGTSVTVKYLRSHGYMSTPPPVKEYLQDRMEETKELITEKMEETKDRLTEKLQETKEKVSFKKKVE</sequence>
<accession>Q96ND0</accession>
<accession>D3DUJ4</accession>